<keyword id="KW-0249">Electron transport</keyword>
<keyword id="KW-0349">Heme</keyword>
<keyword id="KW-0408">Iron</keyword>
<keyword id="KW-0472">Membrane</keyword>
<keyword id="KW-0479">Metal-binding</keyword>
<keyword id="KW-0496">Mitochondrion</keyword>
<keyword id="KW-0999">Mitochondrion inner membrane</keyword>
<keyword id="KW-0679">Respiratory chain</keyword>
<keyword id="KW-0812">Transmembrane</keyword>
<keyword id="KW-1133">Transmembrane helix</keyword>
<keyword id="KW-0813">Transport</keyword>
<keyword id="KW-0830">Ubiquinone</keyword>
<organism>
    <name type="scientific">Mytilus edulis</name>
    <name type="common">Blue mussel</name>
    <dbReference type="NCBI Taxonomy" id="6550"/>
    <lineage>
        <taxon>Eukaryota</taxon>
        <taxon>Metazoa</taxon>
        <taxon>Spiralia</taxon>
        <taxon>Lophotrochozoa</taxon>
        <taxon>Mollusca</taxon>
        <taxon>Bivalvia</taxon>
        <taxon>Autobranchia</taxon>
        <taxon>Pteriomorphia</taxon>
        <taxon>Mytilida</taxon>
        <taxon>Mytiloidea</taxon>
        <taxon>Mytilidae</taxon>
        <taxon>Mytilinae</taxon>
        <taxon>Mytilus</taxon>
    </lineage>
</organism>
<accession>Q00228</accession>
<accession>Q68SR7</accession>
<proteinExistence type="inferred from homology"/>
<comment type="function">
    <text evidence="2">Component of the ubiquinol-cytochrome c reductase complex (complex III or cytochrome b-c1 complex) that is part of the mitochondrial respiratory chain. The b-c1 complex mediates electron transfer from ubiquinol to cytochrome c. Contributes to the generation of a proton gradient across the mitochondrial membrane that is then used for ATP synthesis.</text>
</comment>
<comment type="cofactor">
    <cofactor evidence="2">
        <name>heme b</name>
        <dbReference type="ChEBI" id="CHEBI:60344"/>
    </cofactor>
    <text evidence="2">Binds 2 heme b groups non-covalently.</text>
</comment>
<comment type="subunit">
    <text evidence="2">The main subunits of complex b-c1 are: cytochrome b, cytochrome c1 and the Rieske protein.</text>
</comment>
<comment type="subcellular location">
    <subcellularLocation>
        <location evidence="3">Mitochondrion inner membrane</location>
        <topology evidence="3">Multi-pass membrane protein</topology>
    </subcellularLocation>
</comment>
<comment type="miscellaneous">
    <text evidence="1">Heme 1 (or BL or b562) is low-potential and absorbs at about 562 nm, and heme 2 (or BH or b566) is high-potential and absorbs at about 566 nm.</text>
</comment>
<comment type="similarity">
    <text evidence="4 5">Belongs to the cytochrome b family.</text>
</comment>
<comment type="caution">
    <text evidence="2">The full-length protein contains only eight transmembrane helices, not nine as predicted by bioinformatics tools.</text>
</comment>
<name>CYB_MYTED</name>
<dbReference type="EMBL" id="AY484747">
    <property type="protein sequence ID" value="AAT98404.1"/>
    <property type="molecule type" value="Genomic_DNA"/>
</dbReference>
<dbReference type="PIR" id="S28745">
    <property type="entry name" value="S28745"/>
</dbReference>
<dbReference type="RefSeq" id="YP_073336.1">
    <property type="nucleotide sequence ID" value="NC_006161.1"/>
</dbReference>
<dbReference type="SMR" id="Q00228"/>
<dbReference type="GO" id="GO:0005743">
    <property type="term" value="C:mitochondrial inner membrane"/>
    <property type="evidence" value="ECO:0007669"/>
    <property type="project" value="UniProtKB-SubCell"/>
</dbReference>
<dbReference type="GO" id="GO:0045275">
    <property type="term" value="C:respiratory chain complex III"/>
    <property type="evidence" value="ECO:0007669"/>
    <property type="project" value="InterPro"/>
</dbReference>
<dbReference type="GO" id="GO:0046872">
    <property type="term" value="F:metal ion binding"/>
    <property type="evidence" value="ECO:0007669"/>
    <property type="project" value="UniProtKB-KW"/>
</dbReference>
<dbReference type="GO" id="GO:0008121">
    <property type="term" value="F:ubiquinol-cytochrome-c reductase activity"/>
    <property type="evidence" value="ECO:0007669"/>
    <property type="project" value="InterPro"/>
</dbReference>
<dbReference type="GO" id="GO:0006122">
    <property type="term" value="P:mitochondrial electron transport, ubiquinol to cytochrome c"/>
    <property type="evidence" value="ECO:0007669"/>
    <property type="project" value="TreeGrafter"/>
</dbReference>
<dbReference type="CDD" id="cd00290">
    <property type="entry name" value="cytochrome_b_C"/>
    <property type="match status" value="1"/>
</dbReference>
<dbReference type="CDD" id="cd00284">
    <property type="entry name" value="Cytochrome_b_N"/>
    <property type="match status" value="1"/>
</dbReference>
<dbReference type="Gene3D" id="1.20.810.10">
    <property type="entry name" value="Cytochrome Bc1 Complex, Chain C"/>
    <property type="match status" value="1"/>
</dbReference>
<dbReference type="InterPro" id="IPR005798">
    <property type="entry name" value="Cyt_b/b6_C"/>
</dbReference>
<dbReference type="InterPro" id="IPR036150">
    <property type="entry name" value="Cyt_b/b6_C_sf"/>
</dbReference>
<dbReference type="InterPro" id="IPR005797">
    <property type="entry name" value="Cyt_b/b6_N"/>
</dbReference>
<dbReference type="InterPro" id="IPR027387">
    <property type="entry name" value="Cytb/b6-like_sf"/>
</dbReference>
<dbReference type="InterPro" id="IPR030689">
    <property type="entry name" value="Cytochrome_b"/>
</dbReference>
<dbReference type="InterPro" id="IPR048260">
    <property type="entry name" value="Cytochrome_b_C_euk/bac"/>
</dbReference>
<dbReference type="InterPro" id="IPR048259">
    <property type="entry name" value="Cytochrome_b_N_euk/bac"/>
</dbReference>
<dbReference type="InterPro" id="IPR016174">
    <property type="entry name" value="Di-haem_cyt_TM"/>
</dbReference>
<dbReference type="PANTHER" id="PTHR19271">
    <property type="entry name" value="CYTOCHROME B"/>
    <property type="match status" value="1"/>
</dbReference>
<dbReference type="PANTHER" id="PTHR19271:SF16">
    <property type="entry name" value="CYTOCHROME B"/>
    <property type="match status" value="1"/>
</dbReference>
<dbReference type="Pfam" id="PF00032">
    <property type="entry name" value="Cytochrom_B_C"/>
    <property type="match status" value="1"/>
</dbReference>
<dbReference type="Pfam" id="PF00033">
    <property type="entry name" value="Cytochrome_B"/>
    <property type="match status" value="1"/>
</dbReference>
<dbReference type="PIRSF" id="PIRSF038885">
    <property type="entry name" value="COB"/>
    <property type="match status" value="1"/>
</dbReference>
<dbReference type="SUPFAM" id="SSF81648">
    <property type="entry name" value="a domain/subunit of cytochrome bc1 complex (Ubiquinol-cytochrome c reductase)"/>
    <property type="match status" value="1"/>
</dbReference>
<dbReference type="SUPFAM" id="SSF81342">
    <property type="entry name" value="Transmembrane di-heme cytochromes"/>
    <property type="match status" value="1"/>
</dbReference>
<dbReference type="PROSITE" id="PS51003">
    <property type="entry name" value="CYTB_CTER"/>
    <property type="match status" value="1"/>
</dbReference>
<dbReference type="PROSITE" id="PS51002">
    <property type="entry name" value="CYTB_NTER"/>
    <property type="match status" value="1"/>
</dbReference>
<evidence type="ECO:0000250" key="1"/>
<evidence type="ECO:0000250" key="2">
    <source>
        <dbReference type="UniProtKB" id="P00157"/>
    </source>
</evidence>
<evidence type="ECO:0000250" key="3">
    <source>
        <dbReference type="UniProtKB" id="P00163"/>
    </source>
</evidence>
<evidence type="ECO:0000255" key="4">
    <source>
        <dbReference type="PROSITE-ProRule" id="PRU00967"/>
    </source>
</evidence>
<evidence type="ECO:0000255" key="5">
    <source>
        <dbReference type="PROSITE-ProRule" id="PRU00968"/>
    </source>
</evidence>
<reference key="1">
    <citation type="journal article" date="2004" name="Mol. Biol. Evol.">
        <title>Complete sequences of the highly rearranged molluscan mitochondrial genomes of the scaphopod Graptacme eborea and the bivalve Mytilus edulis.</title>
        <authorList>
            <person name="Boore J.L."/>
            <person name="Medina M."/>
            <person name="Rosenberg L.A."/>
        </authorList>
    </citation>
    <scope>NUCLEOTIDE SEQUENCE [GENOMIC DNA]</scope>
</reference>
<reference key="2">
    <citation type="journal article" date="1992" name="Genetics">
        <title>A novel mitochondrial genome organization for the blue mussel, Mytilus edulis.</title>
        <authorList>
            <person name="Hoffmann R.J."/>
            <person name="Boore J.L."/>
            <person name="Brown W.M."/>
        </authorList>
    </citation>
    <scope>NUCLEOTIDE SEQUENCE [GENOMIC DNA] OF 1-202 AND 333-397</scope>
</reference>
<sequence>MVGNNTAYNTNAPKSVGPWRSTNKLVKIMNDSFYDLPCPVNLNAWWSFGSMLGLCLVIQLLSGLLLSAHYTAHEDMAFDSVVHIMRNVEKGWMLRNIHANGSSMFFICIYAHIARGLYYGSYLDKTVWYFGVHLFLLTMAEAFLGYTLPWGQMSYWGATVITNMLSVSPVVGESMLRYVWGGWTVCNATLKRFYTLHFLLPFVMVAVVFLHLFFLHEKGSNNPLGIESGTMCVPFHPFYTIKDLFGYVCFSFFFMYLVCVDPELLGNHLNYWPANPMKTPIHVQPEWYFMFAYAILRSIPHKAGGVYVMFLSIVVLYLIPTLHTGKYRSLCFYPLNQVVFWVLVGSFISLTWIGARPVREPYIILGSAFQLFISLVYCWTPFLYGCEMNYLNTLNFV</sequence>
<gene>
    <name type="primary">MT-CYB</name>
    <name type="synonym">COB</name>
    <name type="synonym">CYTB</name>
    <name type="synonym">MTCYB</name>
</gene>
<geneLocation type="mitochondrion"/>
<protein>
    <recommendedName>
        <fullName>Cytochrome b</fullName>
    </recommendedName>
    <alternativeName>
        <fullName>Complex III subunit 3</fullName>
    </alternativeName>
    <alternativeName>
        <fullName>Complex III subunit III</fullName>
    </alternativeName>
    <alternativeName>
        <fullName>Cytochrome b-c1 complex subunit 3</fullName>
    </alternativeName>
    <alternativeName>
        <fullName>Ubiquinol-cytochrome-c reductase complex cytochrome b subunit</fullName>
    </alternativeName>
</protein>
<feature type="chain" id="PRO_0000061260" description="Cytochrome b">
    <location>
        <begin position="1"/>
        <end position="397"/>
    </location>
</feature>
<feature type="transmembrane region" description="Helical" evidence="2">
    <location>
        <begin position="48"/>
        <end position="68"/>
    </location>
</feature>
<feature type="transmembrane region" description="Helical" evidence="2">
    <location>
        <begin position="92"/>
        <end position="113"/>
    </location>
</feature>
<feature type="transmembrane region" description="Helical" evidence="2">
    <location>
        <begin position="128"/>
        <end position="148"/>
    </location>
</feature>
<feature type="transmembrane region" description="Helical" evidence="2">
    <location>
        <begin position="193"/>
        <end position="213"/>
    </location>
</feature>
<feature type="transmembrane region" description="Helical" evidence="2">
    <location>
        <begin position="241"/>
        <end position="261"/>
    </location>
</feature>
<feature type="transmembrane region" description="Helical" evidence="2">
    <location>
        <begin position="303"/>
        <end position="323"/>
    </location>
</feature>
<feature type="transmembrane region" description="Helical" evidence="2">
    <location>
        <begin position="335"/>
        <end position="355"/>
    </location>
</feature>
<feature type="transmembrane region" description="Helical" evidence="2">
    <location>
        <begin position="362"/>
        <end position="382"/>
    </location>
</feature>
<feature type="binding site" description="axial binding residue" evidence="2">
    <location>
        <position position="98"/>
    </location>
    <ligand>
        <name>heme b</name>
        <dbReference type="ChEBI" id="CHEBI:60344"/>
        <label>b562</label>
    </ligand>
    <ligandPart>
        <name>Fe</name>
        <dbReference type="ChEBI" id="CHEBI:18248"/>
    </ligandPart>
</feature>
<feature type="binding site" description="axial binding residue" evidence="2">
    <location>
        <position position="112"/>
    </location>
    <ligand>
        <name>heme b</name>
        <dbReference type="ChEBI" id="CHEBI:60344"/>
        <label>b566</label>
    </ligand>
    <ligandPart>
        <name>Fe</name>
        <dbReference type="ChEBI" id="CHEBI:18248"/>
    </ligandPart>
</feature>
<feature type="binding site" description="axial binding residue" evidence="2">
    <location>
        <position position="197"/>
    </location>
    <ligand>
        <name>heme b</name>
        <dbReference type="ChEBI" id="CHEBI:60344"/>
        <label>b562</label>
    </ligand>
    <ligandPart>
        <name>Fe</name>
        <dbReference type="ChEBI" id="CHEBI:18248"/>
    </ligandPart>
</feature>
<feature type="binding site" description="axial binding residue" evidence="2">
    <location>
        <position position="211"/>
    </location>
    <ligand>
        <name>heme b</name>
        <dbReference type="ChEBI" id="CHEBI:60344"/>
        <label>b566</label>
    </ligand>
    <ligandPart>
        <name>Fe</name>
        <dbReference type="ChEBI" id="CHEBI:18248"/>
    </ligandPart>
</feature>
<feature type="binding site" evidence="2">
    <location>
        <position position="216"/>
    </location>
    <ligand>
        <name>a ubiquinone</name>
        <dbReference type="ChEBI" id="CHEBI:16389"/>
    </ligand>
</feature>